<feature type="chain" id="PRO_0000316412" description="Photosystem II protein D1 1" evidence="1">
    <location>
        <begin position="1"/>
        <end position="344"/>
    </location>
</feature>
<feature type="propeptide" id="PRO_0000316413" evidence="1">
    <location>
        <begin position="345"/>
        <end position="359"/>
    </location>
</feature>
<feature type="transmembrane region" description="Helical" evidence="1">
    <location>
        <begin position="29"/>
        <end position="46"/>
    </location>
</feature>
<feature type="transmembrane region" description="Helical" evidence="1">
    <location>
        <begin position="118"/>
        <end position="133"/>
    </location>
</feature>
<feature type="transmembrane region" description="Helical" evidence="1">
    <location>
        <begin position="142"/>
        <end position="156"/>
    </location>
</feature>
<feature type="transmembrane region" description="Helical" evidence="1">
    <location>
        <begin position="197"/>
        <end position="218"/>
    </location>
</feature>
<feature type="transmembrane region" description="Helical" evidence="1">
    <location>
        <begin position="274"/>
        <end position="288"/>
    </location>
</feature>
<feature type="binding site" description="axial binding residue" evidence="1">
    <location>
        <position position="118"/>
    </location>
    <ligand>
        <name>chlorophyll a</name>
        <dbReference type="ChEBI" id="CHEBI:58416"/>
        <label>ChlzD1</label>
    </ligand>
    <ligandPart>
        <name>Mg</name>
        <dbReference type="ChEBI" id="CHEBI:25107"/>
    </ligandPart>
</feature>
<feature type="binding site" evidence="1">
    <location>
        <position position="126"/>
    </location>
    <ligand>
        <name>pheophytin a</name>
        <dbReference type="ChEBI" id="CHEBI:136840"/>
        <label>D1</label>
    </ligand>
</feature>
<feature type="binding site" evidence="1">
    <location>
        <position position="170"/>
    </location>
    <ligand>
        <name>[CaMn4O5] cluster</name>
        <dbReference type="ChEBI" id="CHEBI:189552"/>
    </ligand>
</feature>
<feature type="binding site" evidence="1">
    <location>
        <position position="189"/>
    </location>
    <ligand>
        <name>[CaMn4O5] cluster</name>
        <dbReference type="ChEBI" id="CHEBI:189552"/>
    </ligand>
</feature>
<feature type="binding site" description="axial binding residue" evidence="1">
    <location>
        <position position="198"/>
    </location>
    <ligand>
        <name>chlorophyll a</name>
        <dbReference type="ChEBI" id="CHEBI:58416"/>
        <label>PD1</label>
    </ligand>
    <ligandPart>
        <name>Mg</name>
        <dbReference type="ChEBI" id="CHEBI:25107"/>
    </ligandPart>
</feature>
<feature type="binding site" evidence="1">
    <location>
        <position position="215"/>
    </location>
    <ligand>
        <name>a quinone</name>
        <dbReference type="ChEBI" id="CHEBI:132124"/>
        <label>B</label>
    </ligand>
</feature>
<feature type="binding site" evidence="1">
    <location>
        <position position="215"/>
    </location>
    <ligand>
        <name>Fe cation</name>
        <dbReference type="ChEBI" id="CHEBI:24875"/>
        <note>ligand shared with heterodimeric partner</note>
    </ligand>
</feature>
<feature type="binding site" evidence="1">
    <location>
        <begin position="264"/>
        <end position="265"/>
    </location>
    <ligand>
        <name>a quinone</name>
        <dbReference type="ChEBI" id="CHEBI:132124"/>
        <label>B</label>
    </ligand>
</feature>
<feature type="binding site" evidence="1">
    <location>
        <position position="272"/>
    </location>
    <ligand>
        <name>Fe cation</name>
        <dbReference type="ChEBI" id="CHEBI:24875"/>
        <note>ligand shared with heterodimeric partner</note>
    </ligand>
</feature>
<feature type="binding site" evidence="1">
    <location>
        <position position="332"/>
    </location>
    <ligand>
        <name>[CaMn4O5] cluster</name>
        <dbReference type="ChEBI" id="CHEBI:189552"/>
    </ligand>
</feature>
<feature type="binding site" evidence="1">
    <location>
        <position position="333"/>
    </location>
    <ligand>
        <name>[CaMn4O5] cluster</name>
        <dbReference type="ChEBI" id="CHEBI:189552"/>
    </ligand>
</feature>
<feature type="binding site" evidence="1">
    <location>
        <position position="342"/>
    </location>
    <ligand>
        <name>[CaMn4O5] cluster</name>
        <dbReference type="ChEBI" id="CHEBI:189552"/>
    </ligand>
</feature>
<feature type="binding site" evidence="1">
    <location>
        <position position="344"/>
    </location>
    <ligand>
        <name>[CaMn4O5] cluster</name>
        <dbReference type="ChEBI" id="CHEBI:189552"/>
    </ligand>
</feature>
<feature type="site" description="Tyrosine radical intermediate" evidence="1">
    <location>
        <position position="161"/>
    </location>
</feature>
<feature type="site" description="Stabilizes free radical intermediate" evidence="1">
    <location>
        <position position="190"/>
    </location>
</feature>
<feature type="site" description="Cleavage; by CtpA" evidence="1">
    <location>
        <begin position="344"/>
        <end position="345"/>
    </location>
</feature>
<reference key="1">
    <citation type="submission" date="2006-05" db="EMBL/GenBank/DDBJ databases">
        <authorList>
            <consortium name="Genoscope"/>
        </authorList>
    </citation>
    <scope>NUCLEOTIDE SEQUENCE [LARGE SCALE GENOMIC DNA]</scope>
    <source>
        <strain>RCC307</strain>
    </source>
</reference>
<protein>
    <recommendedName>
        <fullName evidence="1">Photosystem II protein D1 1</fullName>
        <shortName evidence="1">PSII D1 protein 1</shortName>
        <ecNumber evidence="1">1.10.3.9</ecNumber>
    </recommendedName>
    <alternativeName>
        <fullName evidence="1">Photosystem II Q(B) protein 1</fullName>
    </alternativeName>
</protein>
<dbReference type="EC" id="1.10.3.9" evidence="1"/>
<dbReference type="EMBL" id="CT978603">
    <property type="protein sequence ID" value="CAK28343.1"/>
    <property type="molecule type" value="Genomic_DNA"/>
</dbReference>
<dbReference type="EMBL" id="CT978603">
    <property type="protein sequence ID" value="CAK28912.1"/>
    <property type="molecule type" value="Genomic_DNA"/>
</dbReference>
<dbReference type="EMBL" id="CT978603">
    <property type="protein sequence ID" value="CAK29086.1"/>
    <property type="molecule type" value="Genomic_DNA"/>
</dbReference>
<dbReference type="SMR" id="A5GTY4"/>
<dbReference type="STRING" id="316278.SynRCC307_1440"/>
<dbReference type="KEGG" id="syr:SynRCC307_1440"/>
<dbReference type="KEGG" id="syr:SynRCC307_2009"/>
<dbReference type="KEGG" id="syr:SynRCC307_2183"/>
<dbReference type="eggNOG" id="ENOG502Z87P">
    <property type="taxonomic scope" value="Bacteria"/>
</dbReference>
<dbReference type="HOGENOM" id="CLU_054206_1_0_3"/>
<dbReference type="OrthoDB" id="505356at2"/>
<dbReference type="Proteomes" id="UP000001115">
    <property type="component" value="Chromosome"/>
</dbReference>
<dbReference type="GO" id="GO:0009523">
    <property type="term" value="C:photosystem II"/>
    <property type="evidence" value="ECO:0007669"/>
    <property type="project" value="UniProtKB-KW"/>
</dbReference>
<dbReference type="GO" id="GO:0031676">
    <property type="term" value="C:plasma membrane-derived thylakoid membrane"/>
    <property type="evidence" value="ECO:0007669"/>
    <property type="project" value="UniProtKB-SubCell"/>
</dbReference>
<dbReference type="GO" id="GO:0016168">
    <property type="term" value="F:chlorophyll binding"/>
    <property type="evidence" value="ECO:0007669"/>
    <property type="project" value="UniProtKB-UniRule"/>
</dbReference>
<dbReference type="GO" id="GO:0045156">
    <property type="term" value="F:electron transporter, transferring electrons within the cyclic electron transport pathway of photosynthesis activity"/>
    <property type="evidence" value="ECO:0007669"/>
    <property type="project" value="InterPro"/>
</dbReference>
<dbReference type="GO" id="GO:0005506">
    <property type="term" value="F:iron ion binding"/>
    <property type="evidence" value="ECO:0007669"/>
    <property type="project" value="UniProtKB-UniRule"/>
</dbReference>
<dbReference type="GO" id="GO:0016682">
    <property type="term" value="F:oxidoreductase activity, acting on diphenols and related substances as donors, oxygen as acceptor"/>
    <property type="evidence" value="ECO:0007669"/>
    <property type="project" value="UniProtKB-UniRule"/>
</dbReference>
<dbReference type="GO" id="GO:0010242">
    <property type="term" value="F:oxygen evolving activity"/>
    <property type="evidence" value="ECO:0007669"/>
    <property type="project" value="UniProtKB-EC"/>
</dbReference>
<dbReference type="GO" id="GO:0009772">
    <property type="term" value="P:photosynthetic electron transport in photosystem II"/>
    <property type="evidence" value="ECO:0007669"/>
    <property type="project" value="InterPro"/>
</dbReference>
<dbReference type="GO" id="GO:0009635">
    <property type="term" value="P:response to herbicide"/>
    <property type="evidence" value="ECO:0007669"/>
    <property type="project" value="UniProtKB-KW"/>
</dbReference>
<dbReference type="CDD" id="cd09289">
    <property type="entry name" value="Photosystem-II_D1"/>
    <property type="match status" value="1"/>
</dbReference>
<dbReference type="FunFam" id="1.20.85.10:FF:000002">
    <property type="entry name" value="Photosystem II protein D1"/>
    <property type="match status" value="1"/>
</dbReference>
<dbReference type="Gene3D" id="1.20.85.10">
    <property type="entry name" value="Photosystem II protein D1-like"/>
    <property type="match status" value="1"/>
</dbReference>
<dbReference type="HAMAP" id="MF_01379">
    <property type="entry name" value="PSII_PsbA_D1"/>
    <property type="match status" value="1"/>
</dbReference>
<dbReference type="InterPro" id="IPR055266">
    <property type="entry name" value="D1/D2"/>
</dbReference>
<dbReference type="InterPro" id="IPR036854">
    <property type="entry name" value="Photo_II_D1/D2_sf"/>
</dbReference>
<dbReference type="InterPro" id="IPR000484">
    <property type="entry name" value="Photo_RC_L/M"/>
</dbReference>
<dbReference type="InterPro" id="IPR055265">
    <property type="entry name" value="Photo_RC_L/M_CS"/>
</dbReference>
<dbReference type="InterPro" id="IPR005867">
    <property type="entry name" value="PSII_D1"/>
</dbReference>
<dbReference type="NCBIfam" id="TIGR01151">
    <property type="entry name" value="psbA"/>
    <property type="match status" value="1"/>
</dbReference>
<dbReference type="PANTHER" id="PTHR33149:SF12">
    <property type="entry name" value="PHOTOSYSTEM II D2 PROTEIN"/>
    <property type="match status" value="1"/>
</dbReference>
<dbReference type="PANTHER" id="PTHR33149">
    <property type="entry name" value="PHOTOSYSTEM II PROTEIN D1"/>
    <property type="match status" value="1"/>
</dbReference>
<dbReference type="Pfam" id="PF00124">
    <property type="entry name" value="Photo_RC"/>
    <property type="match status" value="1"/>
</dbReference>
<dbReference type="PRINTS" id="PR00256">
    <property type="entry name" value="REACTNCENTRE"/>
</dbReference>
<dbReference type="SUPFAM" id="SSF81483">
    <property type="entry name" value="Bacterial photosystem II reaction centre, L and M subunits"/>
    <property type="match status" value="1"/>
</dbReference>
<dbReference type="PROSITE" id="PS00244">
    <property type="entry name" value="REACTION_CENTER"/>
    <property type="match status" value="1"/>
</dbReference>
<sequence length="359" mass="39458">MQTTIQQRSGASAWQQFCEWVTSTDNRLYVGWFGVLMIPTLLAATTCFIVAFIAAPPVDIDGIREPVAGSLLYGNNIISGAVVPSSNAIGLHFYPIWEAASLDEWLYNGGPFQLVIFHFLIGIYAYMGREWELSYRLGMRPWICIAYSAPVAAASAVFLVYPFGQGSFSDAMPLGISGTFNYMLVFQAEHNILMHPFHMLGVAGVFGGSLFSAMHGSLVTSSLVRETTESESQNYGYKFGQEEETYNIVAAHGYFGRLIFQYASFNNSRSLHFFLAAWPVVGIWFTALGVSTMAFNLNGFNFNQSILDSQGRVLNTWADILNRAGLGMEVMHERNAHNFPLDLAAAESAPVALQAPAIG</sequence>
<evidence type="ECO:0000255" key="1">
    <source>
        <dbReference type="HAMAP-Rule" id="MF_01379"/>
    </source>
</evidence>
<evidence type="ECO:0000305" key="2"/>
<organism>
    <name type="scientific">Synechococcus sp. (strain RCC307)</name>
    <dbReference type="NCBI Taxonomy" id="316278"/>
    <lineage>
        <taxon>Bacteria</taxon>
        <taxon>Bacillati</taxon>
        <taxon>Cyanobacteriota</taxon>
        <taxon>Cyanophyceae</taxon>
        <taxon>Synechococcales</taxon>
        <taxon>Synechococcaceae</taxon>
        <taxon>Synechococcus</taxon>
    </lineage>
</organism>
<proteinExistence type="inferred from homology"/>
<keyword id="KW-0106">Calcium</keyword>
<keyword id="KW-0148">Chlorophyll</keyword>
<keyword id="KW-0157">Chromophore</keyword>
<keyword id="KW-0249">Electron transport</keyword>
<keyword id="KW-0359">Herbicide resistance</keyword>
<keyword id="KW-0408">Iron</keyword>
<keyword id="KW-0460">Magnesium</keyword>
<keyword id="KW-0464">Manganese</keyword>
<keyword id="KW-0472">Membrane</keyword>
<keyword id="KW-0479">Metal-binding</keyword>
<keyword id="KW-0560">Oxidoreductase</keyword>
<keyword id="KW-0602">Photosynthesis</keyword>
<keyword id="KW-0604">Photosystem II</keyword>
<keyword id="KW-1185">Reference proteome</keyword>
<keyword id="KW-0793">Thylakoid</keyword>
<keyword id="KW-0812">Transmembrane</keyword>
<keyword id="KW-1133">Transmembrane helix</keyword>
<keyword id="KW-0813">Transport</keyword>
<comment type="function">
    <text evidence="1">Photosystem II (PSII) is a light-driven water:plastoquinone oxidoreductase that uses light energy to abstract electrons from H(2)O, generating O(2) and a proton gradient subsequently used for ATP formation. It consists of a core antenna complex that captures photons, and an electron transfer chain that converts photonic excitation into a charge separation. The D1/D2 (PsbA/PsbD) reaction center heterodimer binds P680, the primary electron donor of PSII as well as several subsequent electron acceptors.</text>
</comment>
<comment type="catalytic activity">
    <reaction evidence="1">
        <text>2 a plastoquinone + 4 hnu + 2 H2O = 2 a plastoquinol + O2</text>
        <dbReference type="Rhea" id="RHEA:36359"/>
        <dbReference type="Rhea" id="RHEA-COMP:9561"/>
        <dbReference type="Rhea" id="RHEA-COMP:9562"/>
        <dbReference type="ChEBI" id="CHEBI:15377"/>
        <dbReference type="ChEBI" id="CHEBI:15379"/>
        <dbReference type="ChEBI" id="CHEBI:17757"/>
        <dbReference type="ChEBI" id="CHEBI:30212"/>
        <dbReference type="ChEBI" id="CHEBI:62192"/>
        <dbReference type="EC" id="1.10.3.9"/>
    </reaction>
</comment>
<comment type="cofactor">
    <text evidence="1">The D1/D2 heterodimer binds P680, chlorophylls that are the primary electron donor of PSII, and subsequent electron acceptors. It shares a non-heme iron and each subunit binds pheophytin, quinone, additional chlorophylls, carotenoids and lipids. D1 provides most of the ligands for the Mn4-Ca-O5 cluster of the oxygen-evolving complex (OEC). There is also a Cl(-1) ion associated with D1 and D2, which is required for oxygen evolution. The PSII complex binds additional chlorophylls, carotenoids and specific lipids.</text>
</comment>
<comment type="subunit">
    <text evidence="1">PSII is composed of 1 copy each of membrane proteins PsbA, PsbB, PsbC, PsbD, PsbE, PsbF, PsbH, PsbI, PsbJ, PsbK, PsbL, PsbM, PsbT, PsbX, PsbY, PsbZ, Psb30/Ycf12, peripheral proteins PsbO, CyanoQ (PsbQ), PsbU, PsbV and a large number of cofactors. It forms dimeric complexes.</text>
</comment>
<comment type="subcellular location">
    <subcellularLocation>
        <location evidence="1">Cellular thylakoid membrane</location>
        <topology evidence="1">Multi-pass membrane protein</topology>
    </subcellularLocation>
</comment>
<comment type="PTM">
    <text evidence="1">Tyr-161 forms a radical intermediate that is referred to as redox-active TyrZ, YZ or Y-Z.</text>
</comment>
<comment type="PTM">
    <text evidence="1">C-terminally processed by CtpA; processing is essential to allow assembly of the oxygen-evolving complex and thus photosynthetic growth.</text>
</comment>
<comment type="miscellaneous">
    <text evidence="1">Cyanobacteria usually contain more than 2 copies of the psbA gene.</text>
</comment>
<comment type="miscellaneous">
    <text evidence="1">2 of the reaction center chlorophylls (ChlD1 and ChlD2) are entirely coordinated by water.</text>
</comment>
<comment type="miscellaneous">
    <text evidence="1">Herbicides such as atrazine, BNT, diuron or ioxynil bind in the Q(B) binding site and block subsequent electron transfer.</text>
</comment>
<comment type="similarity">
    <text evidence="1">Belongs to the reaction center PufL/M/PsbA/D family.</text>
</comment>
<gene>
    <name evidence="1 2" type="primary">psbA1</name>
    <name type="ordered locus">SynRCC307_1440</name>
</gene>
<gene>
    <name evidence="1 2" type="primary">psbA3</name>
    <name type="ordered locus">SynRCC307_2009</name>
</gene>
<gene>
    <name evidence="1 2" type="primary">psbA4</name>
    <name type="ordered locus">SynRCC307_2183</name>
</gene>
<accession>A5GTY4</accession>
<name>PSBA1_SYNR3</name>